<evidence type="ECO:0000255" key="1">
    <source>
        <dbReference type="HAMAP-Rule" id="MF_01690"/>
    </source>
</evidence>
<comment type="function">
    <text evidence="1">Catalyzes the hydrolysis of N-succinyl-L,L-diaminopimelic acid (SDAP), forming succinate and LL-2,6-diaminopimelate (DAP), an intermediate involved in the bacterial biosynthesis of lysine and meso-diaminopimelic acid, an essential component of bacterial cell walls.</text>
</comment>
<comment type="catalytic activity">
    <reaction evidence="1">
        <text>N-succinyl-(2S,6S)-2,6-diaminopimelate + H2O = (2S,6S)-2,6-diaminopimelate + succinate</text>
        <dbReference type="Rhea" id="RHEA:22608"/>
        <dbReference type="ChEBI" id="CHEBI:15377"/>
        <dbReference type="ChEBI" id="CHEBI:30031"/>
        <dbReference type="ChEBI" id="CHEBI:57609"/>
        <dbReference type="ChEBI" id="CHEBI:58087"/>
        <dbReference type="EC" id="3.5.1.18"/>
    </reaction>
</comment>
<comment type="cofactor">
    <cofactor evidence="1">
        <name>Zn(2+)</name>
        <dbReference type="ChEBI" id="CHEBI:29105"/>
    </cofactor>
    <cofactor evidence="1">
        <name>Co(2+)</name>
        <dbReference type="ChEBI" id="CHEBI:48828"/>
    </cofactor>
    <text evidence="1">Binds 2 Zn(2+) or Co(2+) ions per subunit.</text>
</comment>
<comment type="pathway">
    <text evidence="1">Amino-acid biosynthesis; L-lysine biosynthesis via DAP pathway; LL-2,6-diaminopimelate from (S)-tetrahydrodipicolinate (succinylase route): step 3/3.</text>
</comment>
<comment type="subunit">
    <text evidence="1">Homodimer.</text>
</comment>
<comment type="similarity">
    <text evidence="1">Belongs to the peptidase M20A family. DapE subfamily.</text>
</comment>
<feature type="chain" id="PRO_0000375615" description="Succinyl-diaminopimelate desuccinylase">
    <location>
        <begin position="1"/>
        <end position="387"/>
    </location>
</feature>
<feature type="active site" evidence="1">
    <location>
        <position position="75"/>
    </location>
</feature>
<feature type="active site" description="Proton acceptor" evidence="1">
    <location>
        <position position="141"/>
    </location>
</feature>
<feature type="binding site" evidence="1">
    <location>
        <position position="73"/>
    </location>
    <ligand>
        <name>Zn(2+)</name>
        <dbReference type="ChEBI" id="CHEBI:29105"/>
        <label>1</label>
    </ligand>
</feature>
<feature type="binding site" evidence="1">
    <location>
        <position position="106"/>
    </location>
    <ligand>
        <name>Zn(2+)</name>
        <dbReference type="ChEBI" id="CHEBI:29105"/>
        <label>1</label>
    </ligand>
</feature>
<feature type="binding site" evidence="1">
    <location>
        <position position="106"/>
    </location>
    <ligand>
        <name>Zn(2+)</name>
        <dbReference type="ChEBI" id="CHEBI:29105"/>
        <label>2</label>
    </ligand>
</feature>
<feature type="binding site" evidence="1">
    <location>
        <position position="142"/>
    </location>
    <ligand>
        <name>Zn(2+)</name>
        <dbReference type="ChEBI" id="CHEBI:29105"/>
        <label>2</label>
    </ligand>
</feature>
<feature type="binding site" evidence="1">
    <location>
        <position position="170"/>
    </location>
    <ligand>
        <name>Zn(2+)</name>
        <dbReference type="ChEBI" id="CHEBI:29105"/>
        <label>1</label>
    </ligand>
</feature>
<feature type="binding site" evidence="1">
    <location>
        <position position="359"/>
    </location>
    <ligand>
        <name>Zn(2+)</name>
        <dbReference type="ChEBI" id="CHEBI:29105"/>
        <label>2</label>
    </ligand>
</feature>
<name>DAPE_METPB</name>
<protein>
    <recommendedName>
        <fullName evidence="1">Succinyl-diaminopimelate desuccinylase</fullName>
        <shortName evidence="1">SDAP desuccinylase</shortName>
        <ecNumber evidence="1">3.5.1.18</ecNumber>
    </recommendedName>
    <alternativeName>
        <fullName evidence="1">N-succinyl-LL-2,6-diaminoheptanedioate amidohydrolase</fullName>
    </alternativeName>
</protein>
<dbReference type="EC" id="3.5.1.18" evidence="1"/>
<dbReference type="EMBL" id="CP001029">
    <property type="protein sequence ID" value="ACB79765.1"/>
    <property type="molecule type" value="Genomic_DNA"/>
</dbReference>
<dbReference type="RefSeq" id="WP_012453513.1">
    <property type="nucleotide sequence ID" value="NC_010725.1"/>
</dbReference>
<dbReference type="SMR" id="B1ZGA7"/>
<dbReference type="STRING" id="441620.Mpop_1601"/>
<dbReference type="KEGG" id="mpo:Mpop_1601"/>
<dbReference type="eggNOG" id="COG0624">
    <property type="taxonomic scope" value="Bacteria"/>
</dbReference>
<dbReference type="HOGENOM" id="CLU_021802_4_0_5"/>
<dbReference type="OrthoDB" id="9809784at2"/>
<dbReference type="UniPathway" id="UPA00034">
    <property type="reaction ID" value="UER00021"/>
</dbReference>
<dbReference type="Proteomes" id="UP000007136">
    <property type="component" value="Chromosome"/>
</dbReference>
<dbReference type="GO" id="GO:0008777">
    <property type="term" value="F:acetylornithine deacetylase activity"/>
    <property type="evidence" value="ECO:0007669"/>
    <property type="project" value="TreeGrafter"/>
</dbReference>
<dbReference type="GO" id="GO:0050897">
    <property type="term" value="F:cobalt ion binding"/>
    <property type="evidence" value="ECO:0007669"/>
    <property type="project" value="UniProtKB-UniRule"/>
</dbReference>
<dbReference type="GO" id="GO:0009014">
    <property type="term" value="F:succinyl-diaminopimelate desuccinylase activity"/>
    <property type="evidence" value="ECO:0007669"/>
    <property type="project" value="UniProtKB-UniRule"/>
</dbReference>
<dbReference type="GO" id="GO:0008270">
    <property type="term" value="F:zinc ion binding"/>
    <property type="evidence" value="ECO:0007669"/>
    <property type="project" value="UniProtKB-UniRule"/>
</dbReference>
<dbReference type="GO" id="GO:0019877">
    <property type="term" value="P:diaminopimelate biosynthetic process"/>
    <property type="evidence" value="ECO:0007669"/>
    <property type="project" value="UniProtKB-UniRule"/>
</dbReference>
<dbReference type="GO" id="GO:0006526">
    <property type="term" value="P:L-arginine biosynthetic process"/>
    <property type="evidence" value="ECO:0007669"/>
    <property type="project" value="TreeGrafter"/>
</dbReference>
<dbReference type="GO" id="GO:0009089">
    <property type="term" value="P:lysine biosynthetic process via diaminopimelate"/>
    <property type="evidence" value="ECO:0007669"/>
    <property type="project" value="UniProtKB-UniRule"/>
</dbReference>
<dbReference type="CDD" id="cd03891">
    <property type="entry name" value="M20_DapE_proteobac"/>
    <property type="match status" value="1"/>
</dbReference>
<dbReference type="Gene3D" id="3.40.630.10">
    <property type="entry name" value="Zn peptidases"/>
    <property type="match status" value="2"/>
</dbReference>
<dbReference type="HAMAP" id="MF_01690">
    <property type="entry name" value="DapE"/>
    <property type="match status" value="1"/>
</dbReference>
<dbReference type="InterPro" id="IPR001261">
    <property type="entry name" value="ArgE/DapE_CS"/>
</dbReference>
<dbReference type="InterPro" id="IPR036264">
    <property type="entry name" value="Bact_exopeptidase_dim_dom"/>
</dbReference>
<dbReference type="InterPro" id="IPR005941">
    <property type="entry name" value="DapE_proteobac"/>
</dbReference>
<dbReference type="InterPro" id="IPR002933">
    <property type="entry name" value="Peptidase_M20"/>
</dbReference>
<dbReference type="InterPro" id="IPR011650">
    <property type="entry name" value="Peptidase_M20_dimer"/>
</dbReference>
<dbReference type="InterPro" id="IPR050072">
    <property type="entry name" value="Peptidase_M20A"/>
</dbReference>
<dbReference type="NCBIfam" id="TIGR01246">
    <property type="entry name" value="dapE_proteo"/>
    <property type="match status" value="1"/>
</dbReference>
<dbReference type="NCBIfam" id="NF009557">
    <property type="entry name" value="PRK13009.1"/>
    <property type="match status" value="1"/>
</dbReference>
<dbReference type="PANTHER" id="PTHR43808">
    <property type="entry name" value="ACETYLORNITHINE DEACETYLASE"/>
    <property type="match status" value="1"/>
</dbReference>
<dbReference type="PANTHER" id="PTHR43808:SF31">
    <property type="entry name" value="N-ACETYL-L-CITRULLINE DEACETYLASE"/>
    <property type="match status" value="1"/>
</dbReference>
<dbReference type="Pfam" id="PF07687">
    <property type="entry name" value="M20_dimer"/>
    <property type="match status" value="1"/>
</dbReference>
<dbReference type="Pfam" id="PF01546">
    <property type="entry name" value="Peptidase_M20"/>
    <property type="match status" value="1"/>
</dbReference>
<dbReference type="SUPFAM" id="SSF55031">
    <property type="entry name" value="Bacterial exopeptidase dimerisation domain"/>
    <property type="match status" value="1"/>
</dbReference>
<dbReference type="SUPFAM" id="SSF53187">
    <property type="entry name" value="Zn-dependent exopeptidases"/>
    <property type="match status" value="1"/>
</dbReference>
<dbReference type="PROSITE" id="PS00759">
    <property type="entry name" value="ARGE_DAPE_CPG2_2"/>
    <property type="match status" value="1"/>
</dbReference>
<proteinExistence type="inferred from homology"/>
<gene>
    <name evidence="1" type="primary">dapE</name>
    <name type="ordered locus">Mpop_1601</name>
</gene>
<reference key="1">
    <citation type="submission" date="2008-04" db="EMBL/GenBank/DDBJ databases">
        <title>Complete sequence of chromosome of Methylobacterium populi BJ001.</title>
        <authorList>
            <consortium name="US DOE Joint Genome Institute"/>
            <person name="Copeland A."/>
            <person name="Lucas S."/>
            <person name="Lapidus A."/>
            <person name="Glavina del Rio T."/>
            <person name="Dalin E."/>
            <person name="Tice H."/>
            <person name="Bruce D."/>
            <person name="Goodwin L."/>
            <person name="Pitluck S."/>
            <person name="Chertkov O."/>
            <person name="Brettin T."/>
            <person name="Detter J.C."/>
            <person name="Han C."/>
            <person name="Kuske C.R."/>
            <person name="Schmutz J."/>
            <person name="Larimer F."/>
            <person name="Land M."/>
            <person name="Hauser L."/>
            <person name="Kyrpides N."/>
            <person name="Mikhailova N."/>
            <person name="Marx C."/>
            <person name="Richardson P."/>
        </authorList>
    </citation>
    <scope>NUCLEOTIDE SEQUENCE [LARGE SCALE GENOMIC DNA]</scope>
    <source>
        <strain>ATCC BAA-705 / NCIMB 13946 / BJ001</strain>
    </source>
</reference>
<sequence>MSDQSPLALAHALIRCPSVTPEEGGALSFLAERLTEAGFSVERPVFSEAGTPDIENLYARIGTAGPVLVFAGHTDVVPPGEAASWTHGPFSGEITDGFLYGRGAVDMKGGIACMLAATLSFLDRHGPDFGGSIAFLITGDEEGPAVNGTVKLLDWAKARGERFDHCLLGEPTNPDSLGEMIKIGRRGSLTGRITVHGRQGHVAYPHRAENPIPGLLRLASALIAEPLDGGTAHFDASNLEFTTIDVGNPATNVIPASAKAVFNVRFNDDWTAETLGAEIRKRLEAAAGNAVRFSLDLQPSNSPAFLTQPDAFVDLVADAIAAETGRRPALSTTGGTSDARFIKDACPVIEFGLVGRTMHETDERVAVADLDRLTAIYGRVLERYFSS</sequence>
<accession>B1ZGA7</accession>
<organism>
    <name type="scientific">Methylorubrum populi (strain ATCC BAA-705 / NCIMB 13946 / BJ001)</name>
    <name type="common">Methylobacterium populi</name>
    <dbReference type="NCBI Taxonomy" id="441620"/>
    <lineage>
        <taxon>Bacteria</taxon>
        <taxon>Pseudomonadati</taxon>
        <taxon>Pseudomonadota</taxon>
        <taxon>Alphaproteobacteria</taxon>
        <taxon>Hyphomicrobiales</taxon>
        <taxon>Methylobacteriaceae</taxon>
        <taxon>Methylorubrum</taxon>
    </lineage>
</organism>
<keyword id="KW-0028">Amino-acid biosynthesis</keyword>
<keyword id="KW-0170">Cobalt</keyword>
<keyword id="KW-0220">Diaminopimelate biosynthesis</keyword>
<keyword id="KW-0378">Hydrolase</keyword>
<keyword id="KW-0457">Lysine biosynthesis</keyword>
<keyword id="KW-0479">Metal-binding</keyword>
<keyword id="KW-0862">Zinc</keyword>